<gene>
    <name type="ordered locus">YLR156C-A</name>
</gene>
<accession>P0CY03</accession>
<accession>D6VYF2</accession>
<accession>Q3E748</accession>
<accession>Q3E759</accession>
<accession>Q3E768</accession>
<accession>Q3E812</accession>
<organism>
    <name type="scientific">Saccharomyces cerevisiae (strain ATCC 204508 / S288c)</name>
    <name type="common">Baker's yeast</name>
    <dbReference type="NCBI Taxonomy" id="559292"/>
    <lineage>
        <taxon>Eukaryota</taxon>
        <taxon>Fungi</taxon>
        <taxon>Dikarya</taxon>
        <taxon>Ascomycota</taxon>
        <taxon>Saccharomycotina</taxon>
        <taxon>Saccharomycetes</taxon>
        <taxon>Saccharomycetales</taxon>
        <taxon>Saccharomycetaceae</taxon>
        <taxon>Saccharomyces</taxon>
    </lineage>
</organism>
<sequence length="43" mass="4707">MYSCAKKKTTAAPEFRVWSPTTLLGQALTSLTTVDRTGNGAFW</sequence>
<name>YL15A_YEAST</name>
<feature type="chain" id="PRO_0000410459" description="Uncharacterized protein YLR156C-A">
    <location>
        <begin position="1"/>
        <end position="43"/>
    </location>
</feature>
<keyword id="KW-1185">Reference proteome</keyword>
<proteinExistence type="predicted"/>
<reference key="1">
    <citation type="journal article" date="1997" name="Nature">
        <title>The nucleotide sequence of Saccharomyces cerevisiae chromosome XII.</title>
        <authorList>
            <person name="Johnston M."/>
            <person name="Hillier L.W."/>
            <person name="Riles L."/>
            <person name="Albermann K."/>
            <person name="Andre B."/>
            <person name="Ansorge W."/>
            <person name="Benes V."/>
            <person name="Brueckner M."/>
            <person name="Delius H."/>
            <person name="Dubois E."/>
            <person name="Duesterhoeft A."/>
            <person name="Entian K.-D."/>
            <person name="Floeth M."/>
            <person name="Goffeau A."/>
            <person name="Hebling U."/>
            <person name="Heumann K."/>
            <person name="Heuss-Neitzel D."/>
            <person name="Hilbert H."/>
            <person name="Hilger F."/>
            <person name="Kleine K."/>
            <person name="Koetter P."/>
            <person name="Louis E.J."/>
            <person name="Messenguy F."/>
            <person name="Mewes H.-W."/>
            <person name="Miosga T."/>
            <person name="Moestl D."/>
            <person name="Mueller-Auer S."/>
            <person name="Nentwich U."/>
            <person name="Obermaier B."/>
            <person name="Piravandi E."/>
            <person name="Pohl T.M."/>
            <person name="Portetelle D."/>
            <person name="Purnelle B."/>
            <person name="Rechmann S."/>
            <person name="Rieger M."/>
            <person name="Rinke M."/>
            <person name="Rose M."/>
            <person name="Scharfe M."/>
            <person name="Scherens B."/>
            <person name="Scholler P."/>
            <person name="Schwager C."/>
            <person name="Schwarz S."/>
            <person name="Underwood A.P."/>
            <person name="Urrestarazu L.A."/>
            <person name="Vandenbol M."/>
            <person name="Verhasselt P."/>
            <person name="Vierendeels F."/>
            <person name="Voet M."/>
            <person name="Volckaert G."/>
            <person name="Voss H."/>
            <person name="Wambutt R."/>
            <person name="Wedler E."/>
            <person name="Wedler H."/>
            <person name="Zimmermann F.K."/>
            <person name="Zollner A."/>
            <person name="Hani J."/>
            <person name="Hoheisel J.D."/>
        </authorList>
    </citation>
    <scope>NUCLEOTIDE SEQUENCE [LARGE SCALE GENOMIC DNA]</scope>
    <source>
        <strain>ATCC 204508 / S288c</strain>
    </source>
</reference>
<reference key="2">
    <citation type="journal article" date="2014" name="G3 (Bethesda)">
        <title>The reference genome sequence of Saccharomyces cerevisiae: Then and now.</title>
        <authorList>
            <person name="Engel S.R."/>
            <person name="Dietrich F.S."/>
            <person name="Fisk D.G."/>
            <person name="Binkley G."/>
            <person name="Balakrishnan R."/>
            <person name="Costanzo M.C."/>
            <person name="Dwight S.S."/>
            <person name="Hitz B.C."/>
            <person name="Karra K."/>
            <person name="Nash R.S."/>
            <person name="Weng S."/>
            <person name="Wong E.D."/>
            <person name="Lloyd P."/>
            <person name="Skrzypek M.S."/>
            <person name="Miyasato S.R."/>
            <person name="Simison M."/>
            <person name="Cherry J.M."/>
        </authorList>
    </citation>
    <scope>GENOME REANNOTATION</scope>
    <source>
        <strain>ATCC 204508 / S288c</strain>
    </source>
</reference>
<reference key="3">
    <citation type="journal article" date="2003" name="Genome Res.">
        <title>Systematic discovery of new genes in the Saccharomyces cerevisiae genome.</title>
        <authorList>
            <person name="Kessler M.M."/>
            <person name="Zeng Q."/>
            <person name="Hogan S."/>
            <person name="Cook R."/>
            <person name="Morales A.J."/>
            <person name="Cottarel G."/>
        </authorList>
    </citation>
    <scope>GENOME REANNOTATION</scope>
</reference>
<protein>
    <recommendedName>
        <fullName>Uncharacterized protein YLR156C-A</fullName>
    </recommendedName>
</protein>
<dbReference type="EMBL" id="U51921">
    <property type="status" value="NOT_ANNOTATED_CDS"/>
    <property type="molecule type" value="Genomic_DNA"/>
</dbReference>
<dbReference type="EMBL" id="BK006945">
    <property type="protein sequence ID" value="DAA09471.1"/>
    <property type="molecule type" value="Genomic_DNA"/>
</dbReference>
<dbReference type="RefSeq" id="NP_878122.1">
    <property type="nucleotide sequence ID" value="NM_001184561.1"/>
</dbReference>
<dbReference type="RefSeq" id="NP_878123.1">
    <property type="nucleotide sequence ID" value="NM_001184563.1"/>
</dbReference>
<dbReference type="RefSeq" id="NP_878126.1">
    <property type="nucleotide sequence ID" value="NM_001184564.1"/>
</dbReference>
<dbReference type="RefSeq" id="NP_878127.1">
    <property type="nucleotide sequence ID" value="NM_001184565.1"/>
</dbReference>
<dbReference type="BioGRID" id="36952">
    <property type="interactions" value="128"/>
</dbReference>
<dbReference type="BioGRID" id="36953">
    <property type="interactions" value="62"/>
</dbReference>
<dbReference type="BioGRID" id="36957">
    <property type="interactions" value="27"/>
</dbReference>
<dbReference type="FunCoup" id="P0CY03">
    <property type="interactions" value="34"/>
</dbReference>
<dbReference type="EnsemblFungi" id="YLR154C-H_mRNA">
    <property type="protein sequence ID" value="YLR154C-H"/>
    <property type="gene ID" value="YLR154C-H"/>
</dbReference>
<dbReference type="EnsemblFungi" id="YLR156C-A_mRNA">
    <property type="protein sequence ID" value="YLR156C-A"/>
    <property type="gene ID" value="YLR156C-A"/>
</dbReference>
<dbReference type="EnsemblFungi" id="YLR157C-C_mRNA">
    <property type="protein sequence ID" value="YLR157C-C"/>
    <property type="gene ID" value="YLR157C-C"/>
</dbReference>
<dbReference type="EnsemblFungi" id="YLR159C-A_mRNA">
    <property type="protein sequence ID" value="YLR159C-A"/>
    <property type="gene ID" value="YLR159C-A"/>
</dbReference>
<dbReference type="GeneID" id="1466411"/>
<dbReference type="KEGG" id="sce:YLR154C-H"/>
<dbReference type="KEGG" id="sce:YLR156C-A"/>
<dbReference type="KEGG" id="sce:YLR157C-C"/>
<dbReference type="KEGG" id="sce:YLR159C-A"/>
<dbReference type="AGR" id="SGD:S000028564"/>
<dbReference type="SGD" id="S000028564">
    <property type="gene designation" value="YLR156C-A"/>
</dbReference>
<dbReference type="VEuPathDB" id="FungiDB:YLR154C-H"/>
<dbReference type="VEuPathDB" id="FungiDB:YLR156C-A"/>
<dbReference type="VEuPathDB" id="FungiDB:YLR157C-C"/>
<dbReference type="VEuPathDB" id="FungiDB:YLR159C-A"/>
<dbReference type="HOGENOM" id="CLU_3242482_0_0_1"/>
<dbReference type="InParanoid" id="P0CY03"/>
<dbReference type="OrthoDB" id="4088270at2759"/>
<dbReference type="BioCyc" id="YEAST:G3O-32577-MONOMER"/>
<dbReference type="PRO" id="PR:P0CY03"/>
<dbReference type="Proteomes" id="UP000002311">
    <property type="component" value="Chromosome XII"/>
</dbReference>